<reference key="1">
    <citation type="journal article" date="2004" name="Nature">
        <title>Genome evolution in yeasts.</title>
        <authorList>
            <person name="Dujon B."/>
            <person name="Sherman D."/>
            <person name="Fischer G."/>
            <person name="Durrens P."/>
            <person name="Casaregola S."/>
            <person name="Lafontaine I."/>
            <person name="de Montigny J."/>
            <person name="Marck C."/>
            <person name="Neuveglise C."/>
            <person name="Talla E."/>
            <person name="Goffard N."/>
            <person name="Frangeul L."/>
            <person name="Aigle M."/>
            <person name="Anthouard V."/>
            <person name="Babour A."/>
            <person name="Barbe V."/>
            <person name="Barnay S."/>
            <person name="Blanchin S."/>
            <person name="Beckerich J.-M."/>
            <person name="Beyne E."/>
            <person name="Bleykasten C."/>
            <person name="Boisrame A."/>
            <person name="Boyer J."/>
            <person name="Cattolico L."/>
            <person name="Confanioleri F."/>
            <person name="de Daruvar A."/>
            <person name="Despons L."/>
            <person name="Fabre E."/>
            <person name="Fairhead C."/>
            <person name="Ferry-Dumazet H."/>
            <person name="Groppi A."/>
            <person name="Hantraye F."/>
            <person name="Hennequin C."/>
            <person name="Jauniaux N."/>
            <person name="Joyet P."/>
            <person name="Kachouri R."/>
            <person name="Kerrest A."/>
            <person name="Koszul R."/>
            <person name="Lemaire M."/>
            <person name="Lesur I."/>
            <person name="Ma L."/>
            <person name="Muller H."/>
            <person name="Nicaud J.-M."/>
            <person name="Nikolski M."/>
            <person name="Oztas S."/>
            <person name="Ozier-Kalogeropoulos O."/>
            <person name="Pellenz S."/>
            <person name="Potier S."/>
            <person name="Richard G.-F."/>
            <person name="Straub M.-L."/>
            <person name="Suleau A."/>
            <person name="Swennen D."/>
            <person name="Tekaia F."/>
            <person name="Wesolowski-Louvel M."/>
            <person name="Westhof E."/>
            <person name="Wirth B."/>
            <person name="Zeniou-Meyer M."/>
            <person name="Zivanovic Y."/>
            <person name="Bolotin-Fukuhara M."/>
            <person name="Thierry A."/>
            <person name="Bouchier C."/>
            <person name="Caudron B."/>
            <person name="Scarpelli C."/>
            <person name="Gaillardin C."/>
            <person name="Weissenbach J."/>
            <person name="Wincker P."/>
            <person name="Souciet J.-L."/>
        </authorList>
    </citation>
    <scope>NUCLEOTIDE SEQUENCE [LARGE SCALE GENOMIC DNA]</scope>
    <source>
        <strain>ATCC 36239 / CBS 767 / BCRC 21394 / JCM 1990 / NBRC 0083 / IGC 2968</strain>
    </source>
</reference>
<gene>
    <name type="primary">EPL1</name>
    <name type="ordered locus">DEHA2E18392g</name>
</gene>
<proteinExistence type="inferred from homology"/>
<protein>
    <recommendedName>
        <fullName>Enhancer of polycomb-like protein 1</fullName>
    </recommendedName>
</protein>
<accession>Q6BNX0</accession>
<feature type="chain" id="PRO_0000214160" description="Enhancer of polycomb-like protein 1">
    <location>
        <begin position="1"/>
        <end position="1016"/>
    </location>
</feature>
<feature type="region of interest" description="Disordered" evidence="2">
    <location>
        <begin position="1"/>
        <end position="50"/>
    </location>
</feature>
<feature type="region of interest" description="Disordered" evidence="2">
    <location>
        <begin position="96"/>
        <end position="119"/>
    </location>
</feature>
<feature type="region of interest" description="Disordered" evidence="2">
    <location>
        <begin position="450"/>
        <end position="488"/>
    </location>
</feature>
<feature type="region of interest" description="Disordered" evidence="2">
    <location>
        <begin position="499"/>
        <end position="518"/>
    </location>
</feature>
<feature type="region of interest" description="Disordered" evidence="2">
    <location>
        <begin position="842"/>
        <end position="1016"/>
    </location>
</feature>
<feature type="compositionally biased region" description="Polar residues" evidence="2">
    <location>
        <begin position="35"/>
        <end position="50"/>
    </location>
</feature>
<feature type="compositionally biased region" description="Basic and acidic residues" evidence="2">
    <location>
        <begin position="103"/>
        <end position="116"/>
    </location>
</feature>
<feature type="compositionally biased region" description="Basic and acidic residues" evidence="2">
    <location>
        <begin position="457"/>
        <end position="473"/>
    </location>
</feature>
<feature type="compositionally biased region" description="Polar residues" evidence="2">
    <location>
        <begin position="475"/>
        <end position="488"/>
    </location>
</feature>
<feature type="compositionally biased region" description="Low complexity" evidence="2">
    <location>
        <begin position="842"/>
        <end position="883"/>
    </location>
</feature>
<feature type="compositionally biased region" description="Polar residues" evidence="2">
    <location>
        <begin position="884"/>
        <end position="902"/>
    </location>
</feature>
<feature type="compositionally biased region" description="Low complexity" evidence="2">
    <location>
        <begin position="904"/>
        <end position="923"/>
    </location>
</feature>
<feature type="compositionally biased region" description="Polar residues" evidence="2">
    <location>
        <begin position="928"/>
        <end position="956"/>
    </location>
</feature>
<feature type="compositionally biased region" description="Low complexity" evidence="2">
    <location>
        <begin position="960"/>
        <end position="971"/>
    </location>
</feature>
<feature type="compositionally biased region" description="Polar residues" evidence="2">
    <location>
        <begin position="976"/>
        <end position="994"/>
    </location>
</feature>
<name>EPL1_DEBHA</name>
<organism>
    <name type="scientific">Debaryomyces hansenii (strain ATCC 36239 / CBS 767 / BCRC 21394 / JCM 1990 / NBRC 0083 / IGC 2968)</name>
    <name type="common">Yeast</name>
    <name type="synonym">Torulaspora hansenii</name>
    <dbReference type="NCBI Taxonomy" id="284592"/>
    <lineage>
        <taxon>Eukaryota</taxon>
        <taxon>Fungi</taxon>
        <taxon>Dikarya</taxon>
        <taxon>Ascomycota</taxon>
        <taxon>Saccharomycotina</taxon>
        <taxon>Pichiomycetes</taxon>
        <taxon>Debaryomycetaceae</taxon>
        <taxon>Debaryomyces</taxon>
    </lineage>
</organism>
<sequence length="1016" mass="115389">MAIHPSKGTGGSKQSNSGARFRQRKISVKQPLTIYKQSDLPTLNASNDLEPSQIHHLNSNANQQQRDIHAIETGVDKNEEDEVHLQQVINAAQKVLLGSQNEDGDKKKDDSDKKTDASVYIPTPDASRIWTDASKYYNDKSFREPETYIKFSATVEDTVGVEFNMDEIDEEFLKNKLWKNYPKVKSPKVKSEKLDDTNKENDNARKCSEVEFEIICDKLEKIIEEKQPFLSMDPSNILSFKELSAYIIEEFNNSNKDKPYVQLGSNLKYISTTALKEKLSKELSFEPFVTLFDKSLLDQTSTNIVRPIPKLLELFGEPVYEHWKYRKIERKGKQIHPALKFEDPSANEKDNDNDPYICFRRREFRQARKTRRADTLGAERIRLLQKSMHRARDLVMSVCRRELIKLENWETDHAIFKLRSDAKNLKRVVGVKGDDFLFYPHKRKKIIKVKEEDEDKESSKIKRDKRSRFDSSREGSATSMPGSATIGTNAINKDRLANGQVHHTQEASSSSQPYVKLPPSKIPDMGLVTVSLVLKEKNETIKRAVLEKLRKRKEQDKDFINVTDDPYQPFFNIATNTKFKNNELKHIPYSSIAATSFHEINTTNYISEKLKNLLEEGKKPLPGTKTFRGSNGELIPSKPFPHLSALIQDRIDNSQFNSVSYIAQLLSNIENNNFSAYNNGYGQQQQHQHQETNRDKTKLSDPIFRLRKRVGRFNRNFVDRRGLMKRPNDVIDDFLKFDDEGVNDDCDQMDVDSESISKNNVPNVYDSRVDEIKRLDSRWQFDNDLTEYDKGLQSPFSLDPSRLNCISDDTQSIRFGSMLLSKSYDLLRDSVHQRQQALVQQARMRTLQQQQRNNKQQAAGQSSGSSSASLGSNTNSNSSISGQADQGQTNLTNSGITRQGGANVNGSQTSTTNNTRSSVSGGSMNPKLPTQSSQRSNTNSPLLASQPQGYSQQQKFNKIPPTSQSQSQSPTHAAGQLQTSKMYNKHGSNITPSNLKGPKFTPANNNQIGGSLPNRK</sequence>
<dbReference type="EMBL" id="CR382137">
    <property type="protein sequence ID" value="CAG88364.2"/>
    <property type="molecule type" value="Genomic_DNA"/>
</dbReference>
<dbReference type="RefSeq" id="XP_460100.2">
    <property type="nucleotide sequence ID" value="XM_460100.1"/>
</dbReference>
<dbReference type="FunCoup" id="Q6BNX0">
    <property type="interactions" value="257"/>
</dbReference>
<dbReference type="STRING" id="284592.Q6BNX0"/>
<dbReference type="GeneID" id="2902479"/>
<dbReference type="KEGG" id="dha:DEHA2E18392g"/>
<dbReference type="VEuPathDB" id="FungiDB:DEHA2E18392g"/>
<dbReference type="eggNOG" id="KOG2261">
    <property type="taxonomic scope" value="Eukaryota"/>
</dbReference>
<dbReference type="HOGENOM" id="CLU_010580_0_0_1"/>
<dbReference type="InParanoid" id="Q6BNX0"/>
<dbReference type="OMA" id="MLGTKSY"/>
<dbReference type="OrthoDB" id="435275at2759"/>
<dbReference type="Proteomes" id="UP000000599">
    <property type="component" value="Chromosome E"/>
</dbReference>
<dbReference type="GO" id="GO:0035267">
    <property type="term" value="C:NuA4 histone acetyltransferase complex"/>
    <property type="evidence" value="ECO:0007669"/>
    <property type="project" value="InterPro"/>
</dbReference>
<dbReference type="GO" id="GO:0005634">
    <property type="term" value="C:nucleus"/>
    <property type="evidence" value="ECO:0007669"/>
    <property type="project" value="UniProtKB-SubCell"/>
</dbReference>
<dbReference type="GO" id="GO:0006281">
    <property type="term" value="P:DNA repair"/>
    <property type="evidence" value="ECO:0007669"/>
    <property type="project" value="UniProtKB-KW"/>
</dbReference>
<dbReference type="GO" id="GO:0006357">
    <property type="term" value="P:regulation of transcription by RNA polymerase II"/>
    <property type="evidence" value="ECO:0007669"/>
    <property type="project" value="InterPro"/>
</dbReference>
<dbReference type="InterPro" id="IPR024943">
    <property type="entry name" value="Enhancer_polycomb"/>
</dbReference>
<dbReference type="InterPro" id="IPR019542">
    <property type="entry name" value="Enhancer_polycomb-like_N"/>
</dbReference>
<dbReference type="PANTHER" id="PTHR14898">
    <property type="entry name" value="ENHANCER OF POLYCOMB"/>
    <property type="match status" value="1"/>
</dbReference>
<dbReference type="Pfam" id="PF10513">
    <property type="entry name" value="EPL1"/>
    <property type="match status" value="1"/>
</dbReference>
<comment type="function">
    <text evidence="1">Component of the NuA4 histone acetyltransferase complex which is involved in transcriptional activation of selected genes principally by acetylation of nucleosomal histone H4 and H2A. The NuA4 complex is also involved in DNA repair. Involved in gene silencing by neighboring heterochromatin, blockage of the silencing spreading along the chromosome, and required for cell cycle progression through G2/M (By similarity).</text>
</comment>
<comment type="subunit">
    <text evidence="1">Component of the NuA4 histone acetyltransferase complex.</text>
</comment>
<comment type="subcellular location">
    <subcellularLocation>
        <location evidence="1">Nucleus</location>
    </subcellularLocation>
</comment>
<comment type="similarity">
    <text evidence="3">Belongs to the enhancer of polycomb family.</text>
</comment>
<evidence type="ECO:0000250" key="1"/>
<evidence type="ECO:0000256" key="2">
    <source>
        <dbReference type="SAM" id="MobiDB-lite"/>
    </source>
</evidence>
<evidence type="ECO:0000305" key="3"/>
<keyword id="KW-0131">Cell cycle</keyword>
<keyword id="KW-0227">DNA damage</keyword>
<keyword id="KW-0234">DNA repair</keyword>
<keyword id="KW-0539">Nucleus</keyword>
<keyword id="KW-1185">Reference proteome</keyword>
<keyword id="KW-0804">Transcription</keyword>
<keyword id="KW-0805">Transcription regulation</keyword>